<name>RL15_METS4</name>
<sequence length="162" mass="16516">MKLNEIRDNEGATKDRMRVGRGIGSGKGKTAGRGVKGQKARTGVAIKGFEGGQMPLHRRLPKRGFNNPGATDLNEVNVGRIQQAVDSGKLDPSAPVTVEALVAAGVVSRVRDGVKILGVGELTASLTFQVARASKSAVAAIEKAGGSVTQSLAATDGAVASA</sequence>
<accession>B0UHV0</accession>
<reference key="1">
    <citation type="submission" date="2008-02" db="EMBL/GenBank/DDBJ databases">
        <title>Complete sequence of chromosome of Methylobacterium sp. 4-46.</title>
        <authorList>
            <consortium name="US DOE Joint Genome Institute"/>
            <person name="Copeland A."/>
            <person name="Lucas S."/>
            <person name="Lapidus A."/>
            <person name="Glavina del Rio T."/>
            <person name="Dalin E."/>
            <person name="Tice H."/>
            <person name="Bruce D."/>
            <person name="Goodwin L."/>
            <person name="Pitluck S."/>
            <person name="Chertkov O."/>
            <person name="Brettin T."/>
            <person name="Detter J.C."/>
            <person name="Han C."/>
            <person name="Kuske C.R."/>
            <person name="Schmutz J."/>
            <person name="Larimer F."/>
            <person name="Land M."/>
            <person name="Hauser L."/>
            <person name="Kyrpides N."/>
            <person name="Ivanova N."/>
            <person name="Marx C.J."/>
            <person name="Richardson P."/>
        </authorList>
    </citation>
    <scope>NUCLEOTIDE SEQUENCE [LARGE SCALE GENOMIC DNA]</scope>
    <source>
        <strain>4-46</strain>
    </source>
</reference>
<proteinExistence type="inferred from homology"/>
<evidence type="ECO:0000255" key="1">
    <source>
        <dbReference type="HAMAP-Rule" id="MF_01341"/>
    </source>
</evidence>
<evidence type="ECO:0000256" key="2">
    <source>
        <dbReference type="SAM" id="MobiDB-lite"/>
    </source>
</evidence>
<evidence type="ECO:0000305" key="3"/>
<gene>
    <name evidence="1" type="primary">rplO</name>
    <name type="ordered locus">M446_0334</name>
</gene>
<protein>
    <recommendedName>
        <fullName evidence="1">Large ribosomal subunit protein uL15</fullName>
    </recommendedName>
    <alternativeName>
        <fullName evidence="3">50S ribosomal protein L15</fullName>
    </alternativeName>
</protein>
<feature type="chain" id="PRO_1000142843" description="Large ribosomal subunit protein uL15">
    <location>
        <begin position="1"/>
        <end position="162"/>
    </location>
</feature>
<feature type="region of interest" description="Disordered" evidence="2">
    <location>
        <begin position="1"/>
        <end position="42"/>
    </location>
</feature>
<feature type="compositionally biased region" description="Basic and acidic residues" evidence="2">
    <location>
        <begin position="1"/>
        <end position="18"/>
    </location>
</feature>
<feature type="compositionally biased region" description="Gly residues" evidence="2">
    <location>
        <begin position="21"/>
        <end position="35"/>
    </location>
</feature>
<comment type="function">
    <text evidence="1">Binds to the 23S rRNA.</text>
</comment>
<comment type="subunit">
    <text evidence="1">Part of the 50S ribosomal subunit.</text>
</comment>
<comment type="similarity">
    <text evidence="1">Belongs to the universal ribosomal protein uL15 family.</text>
</comment>
<organism>
    <name type="scientific">Methylobacterium sp. (strain 4-46)</name>
    <dbReference type="NCBI Taxonomy" id="426117"/>
    <lineage>
        <taxon>Bacteria</taxon>
        <taxon>Pseudomonadati</taxon>
        <taxon>Pseudomonadota</taxon>
        <taxon>Alphaproteobacteria</taxon>
        <taxon>Hyphomicrobiales</taxon>
        <taxon>Methylobacteriaceae</taxon>
        <taxon>Methylobacterium</taxon>
    </lineage>
</organism>
<keyword id="KW-0687">Ribonucleoprotein</keyword>
<keyword id="KW-0689">Ribosomal protein</keyword>
<keyword id="KW-0694">RNA-binding</keyword>
<keyword id="KW-0699">rRNA-binding</keyword>
<dbReference type="EMBL" id="CP000943">
    <property type="protein sequence ID" value="ACA14905.1"/>
    <property type="molecule type" value="Genomic_DNA"/>
</dbReference>
<dbReference type="RefSeq" id="WP_012330323.1">
    <property type="nucleotide sequence ID" value="NC_010511.1"/>
</dbReference>
<dbReference type="SMR" id="B0UHV0"/>
<dbReference type="STRING" id="426117.M446_0334"/>
<dbReference type="KEGG" id="met:M446_0334"/>
<dbReference type="eggNOG" id="COG0200">
    <property type="taxonomic scope" value="Bacteria"/>
</dbReference>
<dbReference type="HOGENOM" id="CLU_055188_4_0_5"/>
<dbReference type="GO" id="GO:0022625">
    <property type="term" value="C:cytosolic large ribosomal subunit"/>
    <property type="evidence" value="ECO:0007669"/>
    <property type="project" value="TreeGrafter"/>
</dbReference>
<dbReference type="GO" id="GO:0019843">
    <property type="term" value="F:rRNA binding"/>
    <property type="evidence" value="ECO:0007669"/>
    <property type="project" value="UniProtKB-UniRule"/>
</dbReference>
<dbReference type="GO" id="GO:0003735">
    <property type="term" value="F:structural constituent of ribosome"/>
    <property type="evidence" value="ECO:0007669"/>
    <property type="project" value="InterPro"/>
</dbReference>
<dbReference type="GO" id="GO:0006412">
    <property type="term" value="P:translation"/>
    <property type="evidence" value="ECO:0007669"/>
    <property type="project" value="UniProtKB-UniRule"/>
</dbReference>
<dbReference type="Gene3D" id="3.100.10.10">
    <property type="match status" value="1"/>
</dbReference>
<dbReference type="HAMAP" id="MF_01341">
    <property type="entry name" value="Ribosomal_uL15"/>
    <property type="match status" value="1"/>
</dbReference>
<dbReference type="InterPro" id="IPR030878">
    <property type="entry name" value="Ribosomal_uL15"/>
</dbReference>
<dbReference type="InterPro" id="IPR021131">
    <property type="entry name" value="Ribosomal_uL15/eL18"/>
</dbReference>
<dbReference type="InterPro" id="IPR036227">
    <property type="entry name" value="Ribosomal_uL15/eL18_sf"/>
</dbReference>
<dbReference type="InterPro" id="IPR005749">
    <property type="entry name" value="Ribosomal_uL15_bac-type"/>
</dbReference>
<dbReference type="InterPro" id="IPR001196">
    <property type="entry name" value="Ribosomal_uL15_CS"/>
</dbReference>
<dbReference type="NCBIfam" id="TIGR01071">
    <property type="entry name" value="rplO_bact"/>
    <property type="match status" value="1"/>
</dbReference>
<dbReference type="PANTHER" id="PTHR12934">
    <property type="entry name" value="50S RIBOSOMAL PROTEIN L15"/>
    <property type="match status" value="1"/>
</dbReference>
<dbReference type="PANTHER" id="PTHR12934:SF11">
    <property type="entry name" value="LARGE RIBOSOMAL SUBUNIT PROTEIN UL15M"/>
    <property type="match status" value="1"/>
</dbReference>
<dbReference type="Pfam" id="PF00828">
    <property type="entry name" value="Ribosomal_L27A"/>
    <property type="match status" value="1"/>
</dbReference>
<dbReference type="SUPFAM" id="SSF52080">
    <property type="entry name" value="Ribosomal proteins L15p and L18e"/>
    <property type="match status" value="1"/>
</dbReference>
<dbReference type="PROSITE" id="PS00475">
    <property type="entry name" value="RIBOSOMAL_L15"/>
    <property type="match status" value="1"/>
</dbReference>